<keyword id="KW-0235">DNA replication</keyword>
<feature type="chain" id="PRO_1000213696" description="DnaA initiator-associating protein DiaA">
    <location>
        <begin position="1"/>
        <end position="196"/>
    </location>
</feature>
<feature type="domain" description="SIS" evidence="1">
    <location>
        <begin position="34"/>
        <end position="196"/>
    </location>
</feature>
<gene>
    <name evidence="1" type="primary">diaA</name>
    <name type="ordered locus">BWG_2853</name>
</gene>
<reference key="1">
    <citation type="journal article" date="2009" name="J. Bacteriol.">
        <title>Genomic sequencing reveals regulatory mutations and recombinational events in the widely used MC4100 lineage of Escherichia coli K-12.</title>
        <authorList>
            <person name="Ferenci T."/>
            <person name="Zhou Z."/>
            <person name="Betteridge T."/>
            <person name="Ren Y."/>
            <person name="Liu Y."/>
            <person name="Feng L."/>
            <person name="Reeves P.R."/>
            <person name="Wang L."/>
        </authorList>
    </citation>
    <scope>NUCLEOTIDE SEQUENCE [LARGE SCALE GENOMIC DNA]</scope>
    <source>
        <strain>K12 / MC4100 / BW2952</strain>
    </source>
</reference>
<protein>
    <recommendedName>
        <fullName evidence="1">DnaA initiator-associating protein DiaA</fullName>
    </recommendedName>
</protein>
<comment type="function">
    <text evidence="1">Required for the timely initiation of chromosomal replication via direct interactions with the DnaA initiator protein.</text>
</comment>
<comment type="subunit">
    <text evidence="1">Homotetramer; dimer of dimers.</text>
</comment>
<comment type="similarity">
    <text evidence="1">Belongs to the SIS family. DiaA subfamily.</text>
</comment>
<accession>C4ZSP0</accession>
<proteinExistence type="inferred from homology"/>
<evidence type="ECO:0000255" key="1">
    <source>
        <dbReference type="HAMAP-Rule" id="MF_01157"/>
    </source>
</evidence>
<dbReference type="EMBL" id="CP001396">
    <property type="protein sequence ID" value="ACR62846.1"/>
    <property type="molecule type" value="Genomic_DNA"/>
</dbReference>
<dbReference type="RefSeq" id="WP_001158034.1">
    <property type="nucleotide sequence ID" value="NC_012759.1"/>
</dbReference>
<dbReference type="SMR" id="C4ZSP0"/>
<dbReference type="GeneID" id="93778835"/>
<dbReference type="KEGG" id="ebw:BWG_2853"/>
<dbReference type="HOGENOM" id="CLU_080999_3_1_6"/>
<dbReference type="GO" id="GO:0097367">
    <property type="term" value="F:carbohydrate derivative binding"/>
    <property type="evidence" value="ECO:0007669"/>
    <property type="project" value="InterPro"/>
</dbReference>
<dbReference type="GO" id="GO:1901135">
    <property type="term" value="P:carbohydrate derivative metabolic process"/>
    <property type="evidence" value="ECO:0007669"/>
    <property type="project" value="InterPro"/>
</dbReference>
<dbReference type="GO" id="GO:0006260">
    <property type="term" value="P:DNA replication"/>
    <property type="evidence" value="ECO:0007669"/>
    <property type="project" value="UniProtKB-UniRule"/>
</dbReference>
<dbReference type="CDD" id="cd05006">
    <property type="entry name" value="SIS_GmhA"/>
    <property type="match status" value="1"/>
</dbReference>
<dbReference type="FunFam" id="3.40.50.10490:FF:000006">
    <property type="entry name" value="DnaA initiator-associating protein DiaA"/>
    <property type="match status" value="1"/>
</dbReference>
<dbReference type="Gene3D" id="3.40.50.10490">
    <property type="entry name" value="Glucose-6-phosphate isomerase like protein, domain 1"/>
    <property type="match status" value="1"/>
</dbReference>
<dbReference type="HAMAP" id="MF_01157">
    <property type="entry name" value="SIS_DiaA"/>
    <property type="match status" value="1"/>
</dbReference>
<dbReference type="InterPro" id="IPR023070">
    <property type="entry name" value="DiaA"/>
</dbReference>
<dbReference type="InterPro" id="IPR035461">
    <property type="entry name" value="GmhA/DiaA"/>
</dbReference>
<dbReference type="InterPro" id="IPR001347">
    <property type="entry name" value="SIS_dom"/>
</dbReference>
<dbReference type="InterPro" id="IPR046348">
    <property type="entry name" value="SIS_dom_sf"/>
</dbReference>
<dbReference type="InterPro" id="IPR050099">
    <property type="entry name" value="SIS_GmhA/DiaA_subfam"/>
</dbReference>
<dbReference type="NCBIfam" id="NF008138">
    <property type="entry name" value="PRK10886.1"/>
    <property type="match status" value="1"/>
</dbReference>
<dbReference type="NCBIfam" id="NF010546">
    <property type="entry name" value="PRK13936.1"/>
    <property type="match status" value="1"/>
</dbReference>
<dbReference type="PANTHER" id="PTHR30390:SF6">
    <property type="entry name" value="DNAA INITIATOR-ASSOCIATING PROTEIN DIAA"/>
    <property type="match status" value="1"/>
</dbReference>
<dbReference type="PANTHER" id="PTHR30390">
    <property type="entry name" value="SEDOHEPTULOSE 7-PHOSPHATE ISOMERASE / DNAA INITIATOR-ASSOCIATING FACTOR FOR REPLICATION INITIATION"/>
    <property type="match status" value="1"/>
</dbReference>
<dbReference type="Pfam" id="PF13580">
    <property type="entry name" value="SIS_2"/>
    <property type="match status" value="1"/>
</dbReference>
<dbReference type="SUPFAM" id="SSF53697">
    <property type="entry name" value="SIS domain"/>
    <property type="match status" value="1"/>
</dbReference>
<dbReference type="PROSITE" id="PS51464">
    <property type="entry name" value="SIS"/>
    <property type="match status" value="1"/>
</dbReference>
<name>DIAA_ECOBW</name>
<organism>
    <name type="scientific">Escherichia coli (strain K12 / MC4100 / BW2952)</name>
    <dbReference type="NCBI Taxonomy" id="595496"/>
    <lineage>
        <taxon>Bacteria</taxon>
        <taxon>Pseudomonadati</taxon>
        <taxon>Pseudomonadota</taxon>
        <taxon>Gammaproteobacteria</taxon>
        <taxon>Enterobacterales</taxon>
        <taxon>Enterobacteriaceae</taxon>
        <taxon>Escherichia</taxon>
    </lineage>
</organism>
<sequence>MQERIKACFTESIQTQIAAAEALPDAISRAAMTLVQSLLNGNKILCCGNGTSAANAQHFAASMINRFETERPSLPAIALNTDNVVLTAIANDRLHDEVYAKQVRALGHAGDVLLAISTRGNSRDIVKAVEAAVTRDMTIVALTGYDGGELAGLLGPQDVEIRIPSHRSARIQEMHMLTVNCLCDLIDNTLFPHQDD</sequence>